<accession>P42451</accession>
<accession>Q31RL6</accession>
<keyword id="KW-0169">Cobalamin biosynthesis</keyword>
<keyword id="KW-0489">Methyltransferase</keyword>
<keyword id="KW-0627">Porphyrin biosynthesis</keyword>
<keyword id="KW-1185">Reference proteome</keyword>
<keyword id="KW-0949">S-adenosyl-L-methionine</keyword>
<keyword id="KW-0808">Transferase</keyword>
<proteinExistence type="inferred from homology"/>
<gene>
    <name evidence="2" type="primary">cobA</name>
    <name type="ordered locus">Synpcc7942_0271</name>
</gene>
<evidence type="ECO:0000250" key="1">
    <source>
        <dbReference type="UniProtKB" id="P21631"/>
    </source>
</evidence>
<evidence type="ECO:0000303" key="2">
    <source>
    </source>
</evidence>
<evidence type="ECO:0000305" key="3"/>
<comment type="function">
    <text evidence="1">Catalyzes the two successive C-2 and C-7 methylation reactions involved in the conversion of uroporphyrinogen III to precorrin-2 via the intermediate formation of precorrin-1. It is a step in the biosynthesis of both cobalamin (vitamin B12) and siroheme.</text>
</comment>
<comment type="catalytic activity">
    <reaction evidence="1">
        <text>uroporphyrinogen III + 2 S-adenosyl-L-methionine = precorrin-2 + 2 S-adenosyl-L-homocysteine + H(+)</text>
        <dbReference type="Rhea" id="RHEA:32459"/>
        <dbReference type="ChEBI" id="CHEBI:15378"/>
        <dbReference type="ChEBI" id="CHEBI:57308"/>
        <dbReference type="ChEBI" id="CHEBI:57856"/>
        <dbReference type="ChEBI" id="CHEBI:58827"/>
        <dbReference type="ChEBI" id="CHEBI:59789"/>
        <dbReference type="EC" id="2.1.1.107"/>
    </reaction>
    <physiologicalReaction direction="left-to-right" evidence="1">
        <dbReference type="Rhea" id="RHEA:32460"/>
    </physiologicalReaction>
</comment>
<comment type="pathway">
    <text evidence="1">Cofactor biosynthesis; adenosylcobalamin biosynthesis; precorrin-2 from uroporphyrinogen III: step 1/1.</text>
</comment>
<comment type="pathway">
    <text evidence="1">Porphyrin-containing compound metabolism; siroheme biosynthesis; precorrin-2 from uroporphyrinogen III: step 1/1.</text>
</comment>
<comment type="similarity">
    <text evidence="3">Belongs to the precorrin methyltransferase family.</text>
</comment>
<reference key="1">
    <citation type="journal article" date="1994" name="Plant Mol. Biol.">
        <title>Cloning and characterisation of genes for tetrapyrrole biosynthesis from the cyanobacterium Anacystis nidulans R2.</title>
        <authorList>
            <person name="Jones M.C."/>
            <person name="Jenkins J.M."/>
            <person name="Smith A.G."/>
            <person name="Howe C.J."/>
        </authorList>
    </citation>
    <scope>NUCLEOTIDE SEQUENCE [GENOMIC DNA]</scope>
</reference>
<reference key="2">
    <citation type="submission" date="2005-08" db="EMBL/GenBank/DDBJ databases">
        <title>Complete sequence of chromosome 1 of Synechococcus elongatus PCC 7942.</title>
        <authorList>
            <consortium name="US DOE Joint Genome Institute"/>
            <person name="Copeland A."/>
            <person name="Lucas S."/>
            <person name="Lapidus A."/>
            <person name="Barry K."/>
            <person name="Detter J.C."/>
            <person name="Glavina T."/>
            <person name="Hammon N."/>
            <person name="Israni S."/>
            <person name="Pitluck S."/>
            <person name="Schmutz J."/>
            <person name="Larimer F."/>
            <person name="Land M."/>
            <person name="Kyrpides N."/>
            <person name="Lykidis A."/>
            <person name="Golden S."/>
            <person name="Richardson P."/>
        </authorList>
    </citation>
    <scope>NUCLEOTIDE SEQUENCE [LARGE SCALE GENOMIC DNA]</scope>
    <source>
        <strain>ATCC 33912 / PCC 7942 / FACHB-805</strain>
    </source>
</reference>
<feature type="chain" id="PRO_0000150374" description="Uroporphyrinogen-III C-methyltransferase">
    <location>
        <begin position="1"/>
        <end position="243"/>
    </location>
</feature>
<feature type="binding site" evidence="1">
    <location>
        <position position="12"/>
    </location>
    <ligand>
        <name>S-adenosyl-L-homocysteine</name>
        <dbReference type="ChEBI" id="CHEBI:57856"/>
    </ligand>
</feature>
<feature type="binding site" evidence="1">
    <location>
        <begin position="88"/>
        <end position="90"/>
    </location>
    <ligand>
        <name>S-adenosyl-L-homocysteine</name>
        <dbReference type="ChEBI" id="CHEBI:57856"/>
    </ligand>
</feature>
<feature type="binding site" evidence="1">
    <location>
        <begin position="118"/>
        <end position="119"/>
    </location>
    <ligand>
        <name>S-adenosyl-L-homocysteine</name>
        <dbReference type="ChEBI" id="CHEBI:57856"/>
    </ligand>
</feature>
<feature type="binding site" evidence="1">
    <location>
        <position position="166"/>
    </location>
    <ligand>
        <name>S-adenosyl-L-homocysteine</name>
        <dbReference type="ChEBI" id="CHEBI:57856"/>
    </ligand>
</feature>
<feature type="binding site" evidence="1">
    <location>
        <position position="195"/>
    </location>
    <ligand>
        <name>S-adenosyl-L-homocysteine</name>
        <dbReference type="ChEBI" id="CHEBI:57856"/>
    </ligand>
</feature>
<sequence>MTGKVYLVGAGPGDPEYLTLQAQQCLQSAEVLIYDALIDPRILDLVPANCDRIAVGKRGGAESTPQATINQLLVEHCQQGRKVIRLKSGDPFVFGRAASELDALERSGCDYAVLPGLSTALAAPLLAGIPITDPVLSRGFAVYTVHEPDALNWEALAQLETLILLMGSRHLLTIGHELIRHGRSPDSPVALIQWAGHPQQTVLESSLSRMAQQWGDQPLSPCVIVIGEVVRLRKYWAHYRYDG</sequence>
<protein>
    <recommendedName>
        <fullName>Uroporphyrinogen-III C-methyltransferase</fullName>
        <shortName>Urogen III methylase</shortName>
        <ecNumber evidence="1">2.1.1.107</ecNumber>
    </recommendedName>
    <alternativeName>
        <fullName>S-adenosyl-L-methionine:uroporphyrinogen III methyltransferase</fullName>
        <shortName>SUMT</shortName>
    </alternativeName>
    <alternativeName>
        <fullName evidence="2">Uroporphyrinogen III methylase</fullName>
        <shortName evidence="2">UROM</shortName>
    </alternativeName>
</protein>
<name>SUMT_SYNE7</name>
<dbReference type="EC" id="2.1.1.107" evidence="1"/>
<dbReference type="EMBL" id="X70966">
    <property type="protein sequence ID" value="CAA50302.1"/>
    <property type="molecule type" value="Genomic_DNA"/>
</dbReference>
<dbReference type="EMBL" id="CP000100">
    <property type="protein sequence ID" value="ABB56303.1"/>
    <property type="molecule type" value="Genomic_DNA"/>
</dbReference>
<dbReference type="RefSeq" id="WP_011243554.1">
    <property type="nucleotide sequence ID" value="NZ_JACJTX010000002.1"/>
</dbReference>
<dbReference type="SMR" id="P42451"/>
<dbReference type="STRING" id="1140.Synpcc7942_0271"/>
<dbReference type="PaxDb" id="1140-Synpcc7942_0271"/>
<dbReference type="GeneID" id="72429086"/>
<dbReference type="KEGG" id="syf:Synpcc7942_0271"/>
<dbReference type="eggNOG" id="COG0007">
    <property type="taxonomic scope" value="Bacteria"/>
</dbReference>
<dbReference type="HOGENOM" id="CLU_011276_7_0_3"/>
<dbReference type="OrthoDB" id="9815856at2"/>
<dbReference type="BioCyc" id="SYNEL:SYNPCC7942_0271-MONOMER"/>
<dbReference type="UniPathway" id="UPA00148">
    <property type="reaction ID" value="UER00211"/>
</dbReference>
<dbReference type="UniPathway" id="UPA00262">
    <property type="reaction ID" value="UER00211"/>
</dbReference>
<dbReference type="Proteomes" id="UP000889800">
    <property type="component" value="Chromosome"/>
</dbReference>
<dbReference type="GO" id="GO:0004851">
    <property type="term" value="F:uroporphyrin-III C-methyltransferase activity"/>
    <property type="evidence" value="ECO:0007669"/>
    <property type="project" value="UniProtKB-EC"/>
</dbReference>
<dbReference type="GO" id="GO:0009236">
    <property type="term" value="P:cobalamin biosynthetic process"/>
    <property type="evidence" value="ECO:0007669"/>
    <property type="project" value="UniProtKB-UniPathway"/>
</dbReference>
<dbReference type="GO" id="GO:0032259">
    <property type="term" value="P:methylation"/>
    <property type="evidence" value="ECO:0007669"/>
    <property type="project" value="UniProtKB-KW"/>
</dbReference>
<dbReference type="GO" id="GO:0019354">
    <property type="term" value="P:siroheme biosynthetic process"/>
    <property type="evidence" value="ECO:0007669"/>
    <property type="project" value="UniProtKB-UniPathway"/>
</dbReference>
<dbReference type="CDD" id="cd11642">
    <property type="entry name" value="SUMT"/>
    <property type="match status" value="1"/>
</dbReference>
<dbReference type="FunFam" id="3.40.1010.10:FF:000001">
    <property type="entry name" value="Siroheme synthase"/>
    <property type="match status" value="1"/>
</dbReference>
<dbReference type="Gene3D" id="3.40.1010.10">
    <property type="entry name" value="Cobalt-precorrin-4 Transmethylase, Domain 1"/>
    <property type="match status" value="1"/>
</dbReference>
<dbReference type="Gene3D" id="3.30.950.10">
    <property type="entry name" value="Methyltransferase, Cobalt-precorrin-4 Transmethylase, Domain 2"/>
    <property type="match status" value="1"/>
</dbReference>
<dbReference type="InterPro" id="IPR000878">
    <property type="entry name" value="4pyrrol_Mease"/>
</dbReference>
<dbReference type="InterPro" id="IPR035996">
    <property type="entry name" value="4pyrrol_Methylase_sf"/>
</dbReference>
<dbReference type="InterPro" id="IPR014777">
    <property type="entry name" value="4pyrrole_Mease_sub1"/>
</dbReference>
<dbReference type="InterPro" id="IPR014776">
    <property type="entry name" value="4pyrrole_Mease_sub2"/>
</dbReference>
<dbReference type="InterPro" id="IPR006366">
    <property type="entry name" value="CobA/CysG_C"/>
</dbReference>
<dbReference type="InterPro" id="IPR050161">
    <property type="entry name" value="Siro_Cobalamin_biosynth"/>
</dbReference>
<dbReference type="InterPro" id="IPR003043">
    <property type="entry name" value="Uropor_MeTrfase_CS"/>
</dbReference>
<dbReference type="NCBIfam" id="TIGR01469">
    <property type="entry name" value="cobA_cysG_Cterm"/>
    <property type="match status" value="1"/>
</dbReference>
<dbReference type="NCBIfam" id="NF004790">
    <property type="entry name" value="PRK06136.1"/>
    <property type="match status" value="1"/>
</dbReference>
<dbReference type="PANTHER" id="PTHR45790:SF3">
    <property type="entry name" value="S-ADENOSYL-L-METHIONINE-DEPENDENT UROPORPHYRINOGEN III METHYLTRANSFERASE, CHLOROPLASTIC"/>
    <property type="match status" value="1"/>
</dbReference>
<dbReference type="PANTHER" id="PTHR45790">
    <property type="entry name" value="SIROHEME SYNTHASE-RELATED"/>
    <property type="match status" value="1"/>
</dbReference>
<dbReference type="Pfam" id="PF00590">
    <property type="entry name" value="TP_methylase"/>
    <property type="match status" value="1"/>
</dbReference>
<dbReference type="SUPFAM" id="SSF53790">
    <property type="entry name" value="Tetrapyrrole methylase"/>
    <property type="match status" value="1"/>
</dbReference>
<dbReference type="PROSITE" id="PS00839">
    <property type="entry name" value="SUMT_1"/>
    <property type="match status" value="1"/>
</dbReference>
<dbReference type="PROSITE" id="PS00840">
    <property type="entry name" value="SUMT_2"/>
    <property type="match status" value="1"/>
</dbReference>
<organism>
    <name type="scientific">Synechococcus elongatus (strain ATCC 33912 / PCC 7942 / FACHB-805)</name>
    <name type="common">Anacystis nidulans R2</name>
    <dbReference type="NCBI Taxonomy" id="1140"/>
    <lineage>
        <taxon>Bacteria</taxon>
        <taxon>Bacillati</taxon>
        <taxon>Cyanobacteriota</taxon>
        <taxon>Cyanophyceae</taxon>
        <taxon>Synechococcales</taxon>
        <taxon>Synechococcaceae</taxon>
        <taxon>Synechococcus</taxon>
    </lineage>
</organism>